<proteinExistence type="inferred from homology"/>
<comment type="function">
    <text evidence="1">Catalyzes the attachment of glutamate to tRNA(Glu) in a two-step reaction: glutamate is first activated by ATP to form Glu-AMP and then transferred to the acceptor end of tRNA(Glu).</text>
</comment>
<comment type="catalytic activity">
    <reaction evidence="1">
        <text>tRNA(Glu) + L-glutamate + ATP = L-glutamyl-tRNA(Glu) + AMP + diphosphate</text>
        <dbReference type="Rhea" id="RHEA:23540"/>
        <dbReference type="Rhea" id="RHEA-COMP:9663"/>
        <dbReference type="Rhea" id="RHEA-COMP:9680"/>
        <dbReference type="ChEBI" id="CHEBI:29985"/>
        <dbReference type="ChEBI" id="CHEBI:30616"/>
        <dbReference type="ChEBI" id="CHEBI:33019"/>
        <dbReference type="ChEBI" id="CHEBI:78442"/>
        <dbReference type="ChEBI" id="CHEBI:78520"/>
        <dbReference type="ChEBI" id="CHEBI:456215"/>
        <dbReference type="EC" id="6.1.1.17"/>
    </reaction>
</comment>
<comment type="subunit">
    <text evidence="1">Monomer.</text>
</comment>
<comment type="subcellular location">
    <subcellularLocation>
        <location evidence="1">Cytoplasm</location>
    </subcellularLocation>
</comment>
<comment type="similarity">
    <text evidence="1">Belongs to the class-I aminoacyl-tRNA synthetase family. Glutamate--tRNA ligase type 1 subfamily.</text>
</comment>
<organism>
    <name type="scientific">Staphylococcus saprophyticus subsp. saprophyticus (strain ATCC 15305 / DSM 20229 / NCIMB 8711 / NCTC 7292 / S-41)</name>
    <dbReference type="NCBI Taxonomy" id="342451"/>
    <lineage>
        <taxon>Bacteria</taxon>
        <taxon>Bacillati</taxon>
        <taxon>Bacillota</taxon>
        <taxon>Bacilli</taxon>
        <taxon>Bacillales</taxon>
        <taxon>Staphylococcaceae</taxon>
        <taxon>Staphylococcus</taxon>
    </lineage>
</organism>
<reference key="1">
    <citation type="journal article" date="2005" name="Proc. Natl. Acad. Sci. U.S.A.">
        <title>Whole genome sequence of Staphylococcus saprophyticus reveals the pathogenesis of uncomplicated urinary tract infection.</title>
        <authorList>
            <person name="Kuroda M."/>
            <person name="Yamashita A."/>
            <person name="Hirakawa H."/>
            <person name="Kumano M."/>
            <person name="Morikawa K."/>
            <person name="Higashide M."/>
            <person name="Maruyama A."/>
            <person name="Inose Y."/>
            <person name="Matoba K."/>
            <person name="Toh H."/>
            <person name="Kuhara S."/>
            <person name="Hattori M."/>
            <person name="Ohta T."/>
        </authorList>
    </citation>
    <scope>NUCLEOTIDE SEQUENCE [LARGE SCALE GENOMIC DNA]</scope>
    <source>
        <strain>ATCC 15305 / DSM 20229 / NCIMB 8711 / NCTC 7292 / S-41</strain>
    </source>
</reference>
<dbReference type="EC" id="6.1.1.17" evidence="1"/>
<dbReference type="EMBL" id="AP008934">
    <property type="protein sequence ID" value="BAE19373.1"/>
    <property type="molecule type" value="Genomic_DNA"/>
</dbReference>
<dbReference type="RefSeq" id="WP_011303848.1">
    <property type="nucleotide sequence ID" value="NC_007350.1"/>
</dbReference>
<dbReference type="SMR" id="Q49V37"/>
<dbReference type="GeneID" id="3615558"/>
<dbReference type="KEGG" id="ssp:SSP2228"/>
<dbReference type="PATRIC" id="fig|342451.11.peg.2219"/>
<dbReference type="eggNOG" id="COG0008">
    <property type="taxonomic scope" value="Bacteria"/>
</dbReference>
<dbReference type="HOGENOM" id="CLU_015768_6_1_9"/>
<dbReference type="OrthoDB" id="9807503at2"/>
<dbReference type="Proteomes" id="UP000006371">
    <property type="component" value="Chromosome"/>
</dbReference>
<dbReference type="GO" id="GO:0005829">
    <property type="term" value="C:cytosol"/>
    <property type="evidence" value="ECO:0007669"/>
    <property type="project" value="TreeGrafter"/>
</dbReference>
<dbReference type="GO" id="GO:0005524">
    <property type="term" value="F:ATP binding"/>
    <property type="evidence" value="ECO:0007669"/>
    <property type="project" value="UniProtKB-UniRule"/>
</dbReference>
<dbReference type="GO" id="GO:0004818">
    <property type="term" value="F:glutamate-tRNA ligase activity"/>
    <property type="evidence" value="ECO:0007669"/>
    <property type="project" value="UniProtKB-UniRule"/>
</dbReference>
<dbReference type="GO" id="GO:0000049">
    <property type="term" value="F:tRNA binding"/>
    <property type="evidence" value="ECO:0007669"/>
    <property type="project" value="InterPro"/>
</dbReference>
<dbReference type="GO" id="GO:0008270">
    <property type="term" value="F:zinc ion binding"/>
    <property type="evidence" value="ECO:0007669"/>
    <property type="project" value="InterPro"/>
</dbReference>
<dbReference type="GO" id="GO:0006424">
    <property type="term" value="P:glutamyl-tRNA aminoacylation"/>
    <property type="evidence" value="ECO:0007669"/>
    <property type="project" value="UniProtKB-UniRule"/>
</dbReference>
<dbReference type="CDD" id="cd00808">
    <property type="entry name" value="GluRS_core"/>
    <property type="match status" value="1"/>
</dbReference>
<dbReference type="FunFam" id="1.10.10.350:FF:000002">
    <property type="entry name" value="Glutamate--tRNA ligase"/>
    <property type="match status" value="1"/>
</dbReference>
<dbReference type="FunFam" id="3.40.50.620:FF:000007">
    <property type="entry name" value="Glutamate--tRNA ligase"/>
    <property type="match status" value="1"/>
</dbReference>
<dbReference type="Gene3D" id="1.10.10.350">
    <property type="match status" value="1"/>
</dbReference>
<dbReference type="Gene3D" id="3.40.50.620">
    <property type="entry name" value="HUPs"/>
    <property type="match status" value="1"/>
</dbReference>
<dbReference type="HAMAP" id="MF_00022">
    <property type="entry name" value="Glu_tRNA_synth_type1"/>
    <property type="match status" value="1"/>
</dbReference>
<dbReference type="InterPro" id="IPR045462">
    <property type="entry name" value="aa-tRNA-synth_I_cd-bd"/>
</dbReference>
<dbReference type="InterPro" id="IPR020751">
    <property type="entry name" value="aa-tRNA-synth_I_codon-bd_sub2"/>
</dbReference>
<dbReference type="InterPro" id="IPR001412">
    <property type="entry name" value="aa-tRNA-synth_I_CS"/>
</dbReference>
<dbReference type="InterPro" id="IPR008925">
    <property type="entry name" value="aa_tRNA-synth_I_cd-bd_sf"/>
</dbReference>
<dbReference type="InterPro" id="IPR004527">
    <property type="entry name" value="Glu-tRNA-ligase_bac/mito"/>
</dbReference>
<dbReference type="InterPro" id="IPR000924">
    <property type="entry name" value="Glu/Gln-tRNA-synth"/>
</dbReference>
<dbReference type="InterPro" id="IPR020058">
    <property type="entry name" value="Glu/Gln-tRNA-synth_Ib_cat-dom"/>
</dbReference>
<dbReference type="InterPro" id="IPR049940">
    <property type="entry name" value="GluQ/Sye"/>
</dbReference>
<dbReference type="InterPro" id="IPR033910">
    <property type="entry name" value="GluRS_core"/>
</dbReference>
<dbReference type="InterPro" id="IPR014729">
    <property type="entry name" value="Rossmann-like_a/b/a_fold"/>
</dbReference>
<dbReference type="NCBIfam" id="TIGR00464">
    <property type="entry name" value="gltX_bact"/>
    <property type="match status" value="1"/>
</dbReference>
<dbReference type="PANTHER" id="PTHR43311">
    <property type="entry name" value="GLUTAMATE--TRNA LIGASE"/>
    <property type="match status" value="1"/>
</dbReference>
<dbReference type="PANTHER" id="PTHR43311:SF2">
    <property type="entry name" value="GLUTAMATE--TRNA LIGASE, MITOCHONDRIAL-RELATED"/>
    <property type="match status" value="1"/>
</dbReference>
<dbReference type="Pfam" id="PF19269">
    <property type="entry name" value="Anticodon_2"/>
    <property type="match status" value="1"/>
</dbReference>
<dbReference type="Pfam" id="PF00749">
    <property type="entry name" value="tRNA-synt_1c"/>
    <property type="match status" value="1"/>
</dbReference>
<dbReference type="PRINTS" id="PR00987">
    <property type="entry name" value="TRNASYNTHGLU"/>
</dbReference>
<dbReference type="SUPFAM" id="SSF48163">
    <property type="entry name" value="An anticodon-binding domain of class I aminoacyl-tRNA synthetases"/>
    <property type="match status" value="1"/>
</dbReference>
<dbReference type="SUPFAM" id="SSF52374">
    <property type="entry name" value="Nucleotidylyl transferase"/>
    <property type="match status" value="1"/>
</dbReference>
<dbReference type="PROSITE" id="PS00178">
    <property type="entry name" value="AA_TRNA_LIGASE_I"/>
    <property type="match status" value="1"/>
</dbReference>
<gene>
    <name evidence="1" type="primary">gltX</name>
    <name type="ordered locus">SSP2228</name>
</gene>
<sequence length="484" mass="56387">MSDRVRVRYAPSPTGYLHIGNARTALFNYLFAKHYDGDFVIRIEDTDSKRNLVDGESSQFDNLKWLGIEWDESVDKDKGYGPYRQSERAEIYNPLIQQLLDEDKAYKCYMTEDELEEERQQQIERGEMPRYGGKHAHLTEEERQQFEAEGRKPSIRFRVPKDTTYSFDDMVKGEISFDSNNMGDWVIVKKDGIPTYNFAVAIDDHYMEISDVIRGDDHISNTPKQLMIYETFGWEAPRFAHMSLIVNEERKKLSKRDGQILQFIEQYRDLGYLPEALFNFITLLGWSPEGENEIYSKEDFIKIFDEKRLSKSPAFFDKQKLAWVNNQYMKQKDTETVFELALPHLIKAELLPENPSEADLDWGRKLVSLYQKEMSYAGEIVPLSELFFRDEQTLGDDEQEVIAGEQVPELMNHLYSKLEALEPFEAAEIKKTIKEVQKETGIKGKQLFMPIRVAVTGQMHGPELPNTIEVLGKDKVLSRLKKYV</sequence>
<evidence type="ECO:0000255" key="1">
    <source>
        <dbReference type="HAMAP-Rule" id="MF_00022"/>
    </source>
</evidence>
<name>SYE_STAS1</name>
<protein>
    <recommendedName>
        <fullName evidence="1">Glutamate--tRNA ligase</fullName>
        <ecNumber evidence="1">6.1.1.17</ecNumber>
    </recommendedName>
    <alternativeName>
        <fullName evidence="1">Glutamyl-tRNA synthetase</fullName>
        <shortName evidence="1">GluRS</shortName>
    </alternativeName>
</protein>
<feature type="chain" id="PRO_0000237406" description="Glutamate--tRNA ligase">
    <location>
        <begin position="1"/>
        <end position="484"/>
    </location>
</feature>
<feature type="short sequence motif" description="'HIGH' region" evidence="1">
    <location>
        <begin position="11"/>
        <end position="21"/>
    </location>
</feature>
<feature type="short sequence motif" description="'KMSKS' region" evidence="1">
    <location>
        <begin position="252"/>
        <end position="256"/>
    </location>
</feature>
<feature type="binding site" evidence="1">
    <location>
        <position position="255"/>
    </location>
    <ligand>
        <name>ATP</name>
        <dbReference type="ChEBI" id="CHEBI:30616"/>
    </ligand>
</feature>
<keyword id="KW-0030">Aminoacyl-tRNA synthetase</keyword>
<keyword id="KW-0067">ATP-binding</keyword>
<keyword id="KW-0963">Cytoplasm</keyword>
<keyword id="KW-0436">Ligase</keyword>
<keyword id="KW-0547">Nucleotide-binding</keyword>
<keyword id="KW-0648">Protein biosynthesis</keyword>
<keyword id="KW-1185">Reference proteome</keyword>
<accession>Q49V37</accession>